<proteinExistence type="evidence at protein level"/>
<gene>
    <name type="primary">XPOT</name>
</gene>
<protein>
    <recommendedName>
        <fullName>Exportin-T</fullName>
    </recommendedName>
    <alternativeName>
        <fullName>Exportin(tRNA)</fullName>
    </alternativeName>
    <alternativeName>
        <fullName>tRNA exportin</fullName>
    </alternativeName>
</protein>
<sequence length="962" mass="109964">MDEQALLGLNPNADSDFRQRALAYFEQLKISPDAWQVCAEALAQRTYSDDHVKFFCFQVLEHQVKYKYSELTTVQQQLIRETLISWLQAQMLNPQPEKTFIRNKAAQVFALLFVTEYLTKWPKFFFDILSVVDLNPRGVDLYLRILMAIDSELVDRDVVHTSEEARRNTLIKDTMREQCIPNLVESWYQILQNYQFTNSEVTCQCLEVVGAYVSWIDLSLIANDRFINMLLGHMSIEVLREEACDCLFEVVNKGMDPVDKMKLVESLCQVLQSAGFFSIDQEEDVDFLARFSKLVNGMGQSLIVSWSKLIKNGDIKNAQEALQAIETKVALMLQLLIHEDDDISSNIIGFCYDYLHILKQLTVLSDQQKANVEAIMLAVMKKLTYDEEYNFENEGEDEAMFVEYRKQLKLLLDRLAQVSPELLLASVRRVFSSTLQNWQTTRFMEVEVAIRLLYMLAEALPVSHGAHFSGDVSKASALQDMMRTLVTSGVSSYQHTSVTLEFFETVVRYEKFFTVEPQHIPCVLMAFLDHRGLRHSSAKVRSRTAYLFSRFVKSLNKQMNPFIEDILNRIQDLLELSPPENGHQSLLSSDDQLFIYETAGVLIVNSEYPAERKQALMRNLLTPLMEKFKILLEKLMLAQDEERQASLADCLNHAVGFASRTSKAFSNKQTVKQCGCSEVYLDCLQTFLPALSCPLQKDILRSGVRTFLHRMIICLEEEVLPFIPSASEHMLKDCEAKDLQEFIPLINQITAKFKIQVSPFLQQMFMPLLHAIFEVLLRPAEENDQSAALEKQMLRRSYFAFLQTVTGSGMSEVIANQGAENVERVLVTVIQGAVEYPDPIAQKTCFIILSKLVELWGGKDGPVGFADFVYKHIVPACFLAPLKQTFDLADAQTVLALSECAVTLKTIHLKRGPECVQYLQQEYLPSLQVAPEIIQEFCQALQQPDAKVFKNYLKVFFQRAKP</sequence>
<reference key="1">
    <citation type="journal article" date="1998" name="Mol. Biol. Cell">
        <title>Identification of a tRNA-specific nuclear export receptor.</title>
        <authorList>
            <person name="Kutay U."/>
            <person name="Lipowsky G."/>
            <person name="Izaurralde E."/>
            <person name="Bischoff F.R."/>
            <person name="Schwarzmaier P."/>
            <person name="Hartmann E."/>
            <person name="Goerlich D."/>
        </authorList>
    </citation>
    <scope>NUCLEOTIDE SEQUENCE [MRNA]</scope>
    <scope>PROTEIN SEQUENCE OF 431-440 AND 739-752</scope>
    <scope>FUNCTION IN TRNA EXPORT</scope>
    <scope>IDENTIFICATION IN A COMPLEX WITH RAN AND TRNA</scope>
    <scope>TRNA-BINDING</scope>
    <scope>SUBCELLULAR LOCATION</scope>
    <source>
        <tissue>Cervix carcinoma</tissue>
    </source>
</reference>
<reference key="2">
    <citation type="journal article" date="1998" name="Curr. Biol.">
        <title>Identification of a nuclear export receptor for tRNA.</title>
        <authorList>
            <person name="Arts G.-J."/>
            <person name="Fornerod M."/>
            <person name="Mattaj I.W."/>
        </authorList>
    </citation>
    <scope>NUCLEOTIDE SEQUENCE [MRNA]</scope>
    <scope>FUNCTION IN TRNA EXPORT</scope>
    <scope>IDENTIFICATION IN A COMPLEX WITH RAN AND TRNA</scope>
    <scope>TRNA-BINDING</scope>
    <scope>SUBCELLULAR LOCATION</scope>
    <source>
        <tissue>Cervix carcinoma</tissue>
    </source>
</reference>
<reference key="3">
    <citation type="journal article" date="2006" name="Nature">
        <title>The finished DNA sequence of human chromosome 12.</title>
        <authorList>
            <person name="Scherer S.E."/>
            <person name="Muzny D.M."/>
            <person name="Buhay C.J."/>
            <person name="Chen R."/>
            <person name="Cree A."/>
            <person name="Ding Y."/>
            <person name="Dugan-Rocha S."/>
            <person name="Gill R."/>
            <person name="Gunaratne P."/>
            <person name="Harris R.A."/>
            <person name="Hawes A.C."/>
            <person name="Hernandez J."/>
            <person name="Hodgson A.V."/>
            <person name="Hume J."/>
            <person name="Jackson A."/>
            <person name="Khan Z.M."/>
            <person name="Kovar-Smith C."/>
            <person name="Lewis L.R."/>
            <person name="Lozado R.J."/>
            <person name="Metzker M.L."/>
            <person name="Milosavljevic A."/>
            <person name="Miner G.R."/>
            <person name="Montgomery K.T."/>
            <person name="Morgan M.B."/>
            <person name="Nazareth L.V."/>
            <person name="Scott G."/>
            <person name="Sodergren E."/>
            <person name="Song X.-Z."/>
            <person name="Steffen D."/>
            <person name="Lovering R.C."/>
            <person name="Wheeler D.A."/>
            <person name="Worley K.C."/>
            <person name="Yuan Y."/>
            <person name="Zhang Z."/>
            <person name="Adams C.Q."/>
            <person name="Ansari-Lari M.A."/>
            <person name="Ayele M."/>
            <person name="Brown M.J."/>
            <person name="Chen G."/>
            <person name="Chen Z."/>
            <person name="Clerc-Blankenburg K.P."/>
            <person name="Davis C."/>
            <person name="Delgado O."/>
            <person name="Dinh H.H."/>
            <person name="Draper H."/>
            <person name="Gonzalez-Garay M.L."/>
            <person name="Havlak P."/>
            <person name="Jackson L.R."/>
            <person name="Jacob L.S."/>
            <person name="Kelly S.H."/>
            <person name="Li L."/>
            <person name="Li Z."/>
            <person name="Liu J."/>
            <person name="Liu W."/>
            <person name="Lu J."/>
            <person name="Maheshwari M."/>
            <person name="Nguyen B.-V."/>
            <person name="Okwuonu G.O."/>
            <person name="Pasternak S."/>
            <person name="Perez L.M."/>
            <person name="Plopper F.J.H."/>
            <person name="Santibanez J."/>
            <person name="Shen H."/>
            <person name="Tabor P.E."/>
            <person name="Verduzco D."/>
            <person name="Waldron L."/>
            <person name="Wang Q."/>
            <person name="Williams G.A."/>
            <person name="Zhang J."/>
            <person name="Zhou J."/>
            <person name="Allen C.C."/>
            <person name="Amin A.G."/>
            <person name="Anyalebechi V."/>
            <person name="Bailey M."/>
            <person name="Barbaria J.A."/>
            <person name="Bimage K.E."/>
            <person name="Bryant N.P."/>
            <person name="Burch P.E."/>
            <person name="Burkett C.E."/>
            <person name="Burrell K.L."/>
            <person name="Calderon E."/>
            <person name="Cardenas V."/>
            <person name="Carter K."/>
            <person name="Casias K."/>
            <person name="Cavazos I."/>
            <person name="Cavazos S.R."/>
            <person name="Ceasar H."/>
            <person name="Chacko J."/>
            <person name="Chan S.N."/>
            <person name="Chavez D."/>
            <person name="Christopoulos C."/>
            <person name="Chu J."/>
            <person name="Cockrell R."/>
            <person name="Cox C.D."/>
            <person name="Dang M."/>
            <person name="Dathorne S.R."/>
            <person name="David R."/>
            <person name="Davis C.M."/>
            <person name="Davy-Carroll L."/>
            <person name="Deshazo D.R."/>
            <person name="Donlin J.E."/>
            <person name="D'Souza L."/>
            <person name="Eaves K.A."/>
            <person name="Egan A."/>
            <person name="Emery-Cohen A.J."/>
            <person name="Escotto M."/>
            <person name="Flagg N."/>
            <person name="Forbes L.D."/>
            <person name="Gabisi A.M."/>
            <person name="Garza M."/>
            <person name="Hamilton C."/>
            <person name="Henderson N."/>
            <person name="Hernandez O."/>
            <person name="Hines S."/>
            <person name="Hogues M.E."/>
            <person name="Huang M."/>
            <person name="Idlebird D.G."/>
            <person name="Johnson R."/>
            <person name="Jolivet A."/>
            <person name="Jones S."/>
            <person name="Kagan R."/>
            <person name="King L.M."/>
            <person name="Leal B."/>
            <person name="Lebow H."/>
            <person name="Lee S."/>
            <person name="LeVan J.M."/>
            <person name="Lewis L.C."/>
            <person name="London P."/>
            <person name="Lorensuhewa L.M."/>
            <person name="Loulseged H."/>
            <person name="Lovett D.A."/>
            <person name="Lucier A."/>
            <person name="Lucier R.L."/>
            <person name="Ma J."/>
            <person name="Madu R.C."/>
            <person name="Mapua P."/>
            <person name="Martindale A.D."/>
            <person name="Martinez E."/>
            <person name="Massey E."/>
            <person name="Mawhiney S."/>
            <person name="Meador M.G."/>
            <person name="Mendez S."/>
            <person name="Mercado C."/>
            <person name="Mercado I.C."/>
            <person name="Merritt C.E."/>
            <person name="Miner Z.L."/>
            <person name="Minja E."/>
            <person name="Mitchell T."/>
            <person name="Mohabbat F."/>
            <person name="Mohabbat K."/>
            <person name="Montgomery B."/>
            <person name="Moore N."/>
            <person name="Morris S."/>
            <person name="Munidasa M."/>
            <person name="Ngo R.N."/>
            <person name="Nguyen N.B."/>
            <person name="Nickerson E."/>
            <person name="Nwaokelemeh O.O."/>
            <person name="Nwokenkwo S."/>
            <person name="Obregon M."/>
            <person name="Oguh M."/>
            <person name="Oragunye N."/>
            <person name="Oviedo R.J."/>
            <person name="Parish B.J."/>
            <person name="Parker D.N."/>
            <person name="Parrish J."/>
            <person name="Parks K.L."/>
            <person name="Paul H.A."/>
            <person name="Payton B.A."/>
            <person name="Perez A."/>
            <person name="Perrin W."/>
            <person name="Pickens A."/>
            <person name="Primus E.L."/>
            <person name="Pu L.-L."/>
            <person name="Puazo M."/>
            <person name="Quiles M.M."/>
            <person name="Quiroz J.B."/>
            <person name="Rabata D."/>
            <person name="Reeves K."/>
            <person name="Ruiz S.J."/>
            <person name="Shao H."/>
            <person name="Sisson I."/>
            <person name="Sonaike T."/>
            <person name="Sorelle R.P."/>
            <person name="Sutton A.E."/>
            <person name="Svatek A.F."/>
            <person name="Svetz L.A."/>
            <person name="Tamerisa K.S."/>
            <person name="Taylor T.R."/>
            <person name="Teague B."/>
            <person name="Thomas N."/>
            <person name="Thorn R.D."/>
            <person name="Trejos Z.Y."/>
            <person name="Trevino B.K."/>
            <person name="Ukegbu O.N."/>
            <person name="Urban J.B."/>
            <person name="Vasquez L.I."/>
            <person name="Vera V.A."/>
            <person name="Villasana D.M."/>
            <person name="Wang L."/>
            <person name="Ward-Moore S."/>
            <person name="Warren J.T."/>
            <person name="Wei X."/>
            <person name="White F."/>
            <person name="Williamson A.L."/>
            <person name="Wleczyk R."/>
            <person name="Wooden H.S."/>
            <person name="Wooden S.H."/>
            <person name="Yen J."/>
            <person name="Yoon L."/>
            <person name="Yoon V."/>
            <person name="Zorrilla S.E."/>
            <person name="Nelson D."/>
            <person name="Kucherlapati R."/>
            <person name="Weinstock G."/>
            <person name="Gibbs R.A."/>
        </authorList>
    </citation>
    <scope>NUCLEOTIDE SEQUENCE [LARGE SCALE GENOMIC DNA]</scope>
</reference>
<reference key="4">
    <citation type="journal article" date="2004" name="Genome Res.">
        <title>The status, quality, and expansion of the NIH full-length cDNA project: the Mammalian Gene Collection (MGC).</title>
        <authorList>
            <consortium name="The MGC Project Team"/>
        </authorList>
    </citation>
    <scope>NUCLEOTIDE SEQUENCE [LARGE SCALE MRNA]</scope>
    <scope>VARIANT VAL-526</scope>
    <source>
        <tissue>Lymph</tissue>
        <tissue>Placenta</tissue>
    </source>
</reference>
<reference key="5">
    <citation type="submission" date="2005-06" db="UniProtKB">
        <authorList>
            <person name="Bienvenut W.V."/>
        </authorList>
    </citation>
    <scope>PROTEIN SEQUENCE OF 21-29; 54-65; 317-328; 360-369 AND 825-851</scope>
    <scope>IDENTIFICATION BY MASS SPECTROMETRY</scope>
    <source>
        <tissue>B-cell lymphoma</tissue>
    </source>
</reference>
<reference key="6">
    <citation type="journal article" date="1998" name="EMBO J.">
        <title>The role of exportin-t in selective nuclear export of mature tRNAs.</title>
        <authorList>
            <person name="Arts G.-J."/>
            <person name="Kuersten S."/>
            <person name="Romby P."/>
            <person name="Ehresmann B."/>
            <person name="Mattaj I.W."/>
        </authorList>
    </citation>
    <scope>TRNA-BINDING</scope>
</reference>
<reference key="7">
    <citation type="journal article" date="2002" name="Mol. Cell. Biol.">
        <title>Steady-state nuclear localization of exportin-t involves RanGTP binding and two distinct nuclear pore complex interaction domains.</title>
        <authorList>
            <person name="Kuersten S."/>
            <person name="Arts G.-J."/>
            <person name="Walther T.C."/>
            <person name="Englmeier L."/>
            <person name="Mattaj I.W."/>
        </authorList>
    </citation>
    <scope>FUNCTION IN TRNA EXPORT</scope>
    <scope>MUTAGENESIS OF 405-ARG--LYS-409; 539-LYS--ARG-543; 547-LEU--PHE-551; 548-PHE--VAL-552 AND 550-ARG--LYS-557</scope>
    <scope>IDENTIFICATION IN COMPLEX WITH RAN AND TRNA</scope>
    <scope>IDENTIFICATION IN COMPLEX WITH EXPORTINS</scope>
    <scope>TRNA-BINDING</scope>
    <scope>SUBCELLULAR LOCATION</scope>
</reference>
<reference key="8">
    <citation type="journal article" date="2009" name="Anal. Chem.">
        <title>Lys-N and trypsin cover complementary parts of the phosphoproteome in a refined SCX-based approach.</title>
        <authorList>
            <person name="Gauci S."/>
            <person name="Helbig A.O."/>
            <person name="Slijper M."/>
            <person name="Krijgsveld J."/>
            <person name="Heck A.J."/>
            <person name="Mohammed S."/>
        </authorList>
    </citation>
    <scope>ACETYLATION [LARGE SCALE ANALYSIS] AT MET-1</scope>
    <scope>IDENTIFICATION BY MASS SPECTROMETRY [LARGE SCALE ANALYSIS]</scope>
</reference>
<reference key="9">
    <citation type="journal article" date="2009" name="Science">
        <title>Lysine acetylation targets protein complexes and co-regulates major cellular functions.</title>
        <authorList>
            <person name="Choudhary C."/>
            <person name="Kumar C."/>
            <person name="Gnad F."/>
            <person name="Nielsen M.L."/>
            <person name="Rehman M."/>
            <person name="Walther T.C."/>
            <person name="Olsen J.V."/>
            <person name="Mann M."/>
        </authorList>
    </citation>
    <scope>ACETYLATION [LARGE SCALE ANALYSIS] AT LYS-634</scope>
    <scope>IDENTIFICATION BY MASS SPECTROMETRY [LARGE SCALE ANALYSIS]</scope>
</reference>
<reference key="10">
    <citation type="journal article" date="2011" name="BMC Syst. Biol.">
        <title>Initial characterization of the human central proteome.</title>
        <authorList>
            <person name="Burkard T.R."/>
            <person name="Planyavsky M."/>
            <person name="Kaupe I."/>
            <person name="Breitwieser F.P."/>
            <person name="Buerckstuemmer T."/>
            <person name="Bennett K.L."/>
            <person name="Superti-Furga G."/>
            <person name="Colinge J."/>
        </authorList>
    </citation>
    <scope>IDENTIFICATION BY MASS SPECTROMETRY [LARGE SCALE ANALYSIS]</scope>
</reference>
<reference key="11">
    <citation type="journal article" date="2012" name="Mol. Cell. Proteomics">
        <title>Comparative large-scale characterisation of plant vs. mammal proteins reveals similar and idiosyncratic N-alpha acetylation features.</title>
        <authorList>
            <person name="Bienvenut W.V."/>
            <person name="Sumpton D."/>
            <person name="Martinez A."/>
            <person name="Lilla S."/>
            <person name="Espagne C."/>
            <person name="Meinnel T."/>
            <person name="Giglione C."/>
        </authorList>
    </citation>
    <scope>ACETYLATION [LARGE SCALE ANALYSIS] AT MET-1</scope>
    <scope>IDENTIFICATION BY MASS SPECTROMETRY [LARGE SCALE ANALYSIS]</scope>
</reference>
<reference key="12">
    <citation type="journal article" date="2012" name="Proc. Natl. Acad. Sci. U.S.A.">
        <title>N-terminal acetylome analyses and functional insights of the N-terminal acetyltransferase NatB.</title>
        <authorList>
            <person name="Van Damme P."/>
            <person name="Lasa M."/>
            <person name="Polevoda B."/>
            <person name="Gazquez C."/>
            <person name="Elosegui-Artola A."/>
            <person name="Kim D.S."/>
            <person name="De Juan-Pardo E."/>
            <person name="Demeyer K."/>
            <person name="Hole K."/>
            <person name="Larrea E."/>
            <person name="Timmerman E."/>
            <person name="Prieto J."/>
            <person name="Arnesen T."/>
            <person name="Sherman F."/>
            <person name="Gevaert K."/>
            <person name="Aldabe R."/>
        </authorList>
    </citation>
    <scope>ACETYLATION [LARGE SCALE ANALYSIS] AT MET-1</scope>
    <scope>IDENTIFICATION BY MASS SPECTROMETRY [LARGE SCALE ANALYSIS]</scope>
</reference>
<organism>
    <name type="scientific">Homo sapiens</name>
    <name type="common">Human</name>
    <dbReference type="NCBI Taxonomy" id="9606"/>
    <lineage>
        <taxon>Eukaryota</taxon>
        <taxon>Metazoa</taxon>
        <taxon>Chordata</taxon>
        <taxon>Craniata</taxon>
        <taxon>Vertebrata</taxon>
        <taxon>Euteleostomi</taxon>
        <taxon>Mammalia</taxon>
        <taxon>Eutheria</taxon>
        <taxon>Euarchontoglires</taxon>
        <taxon>Primates</taxon>
        <taxon>Haplorrhini</taxon>
        <taxon>Catarrhini</taxon>
        <taxon>Hominidae</taxon>
        <taxon>Homo</taxon>
    </lineage>
</organism>
<keyword id="KW-0007">Acetylation</keyword>
<keyword id="KW-0963">Cytoplasm</keyword>
<keyword id="KW-0903">Direct protein sequencing</keyword>
<keyword id="KW-0539">Nucleus</keyword>
<keyword id="KW-1267">Proteomics identification</keyword>
<keyword id="KW-1185">Reference proteome</keyword>
<keyword id="KW-0694">RNA-binding</keyword>
<keyword id="KW-0813">Transport</keyword>
<keyword id="KW-0820">tRNA-binding</keyword>
<name>XPOT_HUMAN</name>
<evidence type="ECO:0000269" key="1">
    <source>
    </source>
</evidence>
<evidence type="ECO:0000269" key="2">
    <source>
    </source>
</evidence>
<evidence type="ECO:0000269" key="3">
    <source>
    </source>
</evidence>
<evidence type="ECO:0000269" key="4">
    <source>
    </source>
</evidence>
<evidence type="ECO:0000305" key="5"/>
<evidence type="ECO:0007744" key="6">
    <source>
    </source>
</evidence>
<evidence type="ECO:0007744" key="7">
    <source>
    </source>
</evidence>
<evidence type="ECO:0007744" key="8">
    <source>
    </source>
</evidence>
<evidence type="ECO:0007744" key="9">
    <source>
    </source>
</evidence>
<dbReference type="EMBL" id="AF039022">
    <property type="protein sequence ID" value="AAC39793.1"/>
    <property type="molecule type" value="mRNA"/>
</dbReference>
<dbReference type="EMBL" id="Y16414">
    <property type="protein sequence ID" value="CAA76202.1"/>
    <property type="molecule type" value="mRNA"/>
</dbReference>
<dbReference type="EMBL" id="AC135279">
    <property type="status" value="NOT_ANNOTATED_CDS"/>
    <property type="molecule type" value="Genomic_DNA"/>
</dbReference>
<dbReference type="EMBL" id="BC000950">
    <property type="protein sequence ID" value="AAH00950.1"/>
    <property type="molecule type" value="mRNA"/>
</dbReference>
<dbReference type="EMBL" id="BC020569">
    <property type="protein sequence ID" value="AAH20569.1"/>
    <property type="molecule type" value="mRNA"/>
</dbReference>
<dbReference type="CCDS" id="CCDS31852.1"/>
<dbReference type="RefSeq" id="NP_009166.2">
    <property type="nucleotide sequence ID" value="NM_007235.4"/>
</dbReference>
<dbReference type="RefSeq" id="XP_016874237.1">
    <property type="nucleotide sequence ID" value="XM_017018748.2"/>
</dbReference>
<dbReference type="RefSeq" id="XP_047284149.1">
    <property type="nucleotide sequence ID" value="XM_047428193.1"/>
</dbReference>
<dbReference type="RefSeq" id="XP_054226909.1">
    <property type="nucleotide sequence ID" value="XM_054370934.1"/>
</dbReference>
<dbReference type="RefSeq" id="XP_054226910.1">
    <property type="nucleotide sequence ID" value="XM_054370935.1"/>
</dbReference>
<dbReference type="RefSeq" id="XP_054226911.1">
    <property type="nucleotide sequence ID" value="XM_054370936.1"/>
</dbReference>
<dbReference type="SMR" id="O43592"/>
<dbReference type="BioGRID" id="116420">
    <property type="interactions" value="269"/>
</dbReference>
<dbReference type="CORUM" id="O43592"/>
<dbReference type="FunCoup" id="O43592">
    <property type="interactions" value="4363"/>
</dbReference>
<dbReference type="IntAct" id="O43592">
    <property type="interactions" value="97"/>
</dbReference>
<dbReference type="MINT" id="O43592"/>
<dbReference type="STRING" id="9606.ENSP00000327821"/>
<dbReference type="ChEMBL" id="CHEMBL4105803"/>
<dbReference type="TCDB" id="1.I.1.1.3">
    <property type="family name" value="the nuclear pore complex (npc) family"/>
</dbReference>
<dbReference type="GlyGen" id="O43592">
    <property type="glycosylation" value="1 site, 1 O-linked glycan (1 site)"/>
</dbReference>
<dbReference type="iPTMnet" id="O43592"/>
<dbReference type="MetOSite" id="O43592"/>
<dbReference type="PhosphoSitePlus" id="O43592"/>
<dbReference type="SwissPalm" id="O43592"/>
<dbReference type="BioMuta" id="XPOT"/>
<dbReference type="jPOST" id="O43592"/>
<dbReference type="MassIVE" id="O43592"/>
<dbReference type="PaxDb" id="9606-ENSP00000327821"/>
<dbReference type="PeptideAtlas" id="O43592"/>
<dbReference type="ProteomicsDB" id="49066"/>
<dbReference type="Pumba" id="O43592"/>
<dbReference type="Antibodypedia" id="16571">
    <property type="antibodies" value="123 antibodies from 25 providers"/>
</dbReference>
<dbReference type="DNASU" id="11260"/>
<dbReference type="Ensembl" id="ENST00000332707.10">
    <property type="protein sequence ID" value="ENSP00000327821.5"/>
    <property type="gene ID" value="ENSG00000184575.12"/>
</dbReference>
<dbReference type="GeneID" id="11260"/>
<dbReference type="KEGG" id="hsa:11260"/>
<dbReference type="MANE-Select" id="ENST00000332707.10">
    <property type="protein sequence ID" value="ENSP00000327821.5"/>
    <property type="RefSeq nucleotide sequence ID" value="NM_007235.6"/>
    <property type="RefSeq protein sequence ID" value="NP_009166.2"/>
</dbReference>
<dbReference type="UCSC" id="uc001ssb.4">
    <property type="organism name" value="human"/>
</dbReference>
<dbReference type="AGR" id="HGNC:12826"/>
<dbReference type="CTD" id="11260"/>
<dbReference type="DisGeNET" id="11260"/>
<dbReference type="GeneCards" id="XPOT"/>
<dbReference type="HGNC" id="HGNC:12826">
    <property type="gene designation" value="XPOT"/>
</dbReference>
<dbReference type="HPA" id="ENSG00000184575">
    <property type="expression patterns" value="Low tissue specificity"/>
</dbReference>
<dbReference type="MIM" id="603180">
    <property type="type" value="gene"/>
</dbReference>
<dbReference type="neXtProt" id="NX_O43592"/>
<dbReference type="OpenTargets" id="ENSG00000184575"/>
<dbReference type="PharmGKB" id="PA37419"/>
<dbReference type="VEuPathDB" id="HostDB:ENSG00000184575"/>
<dbReference type="eggNOG" id="KOG2021">
    <property type="taxonomic scope" value="Eukaryota"/>
</dbReference>
<dbReference type="GeneTree" id="ENSGT00390000007890"/>
<dbReference type="HOGENOM" id="CLU_004414_1_0_1"/>
<dbReference type="InParanoid" id="O43592"/>
<dbReference type="OMA" id="HEMFLFG"/>
<dbReference type="OrthoDB" id="26399at2759"/>
<dbReference type="PAN-GO" id="O43592">
    <property type="GO annotations" value="5 GO annotations based on evolutionary models"/>
</dbReference>
<dbReference type="PhylomeDB" id="O43592"/>
<dbReference type="TreeFam" id="TF314001"/>
<dbReference type="PathwayCommons" id="O43592"/>
<dbReference type="Reactome" id="R-HSA-6784531">
    <property type="pathway name" value="tRNA processing in the nucleus"/>
</dbReference>
<dbReference type="SignaLink" id="O43592"/>
<dbReference type="SIGNOR" id="O43592"/>
<dbReference type="BioGRID-ORCS" id="11260">
    <property type="hits" value="145 hits in 1167 CRISPR screens"/>
</dbReference>
<dbReference type="ChiTaRS" id="XPOT">
    <property type="organism name" value="human"/>
</dbReference>
<dbReference type="GeneWiki" id="XPOT"/>
<dbReference type="GenomeRNAi" id="11260"/>
<dbReference type="Pharos" id="O43592">
    <property type="development level" value="Tbio"/>
</dbReference>
<dbReference type="PRO" id="PR:O43592"/>
<dbReference type="Proteomes" id="UP000005640">
    <property type="component" value="Chromosome 12"/>
</dbReference>
<dbReference type="RNAct" id="O43592">
    <property type="molecule type" value="protein"/>
</dbReference>
<dbReference type="Bgee" id="ENSG00000184575">
    <property type="expression patterns" value="Expressed in stromal cell of endometrium and 179 other cell types or tissues"/>
</dbReference>
<dbReference type="ExpressionAtlas" id="O43592">
    <property type="expression patterns" value="baseline and differential"/>
</dbReference>
<dbReference type="GO" id="GO:0005737">
    <property type="term" value="C:cytoplasm"/>
    <property type="evidence" value="ECO:0000314"/>
    <property type="project" value="UniProtKB"/>
</dbReference>
<dbReference type="GO" id="GO:0005829">
    <property type="term" value="C:cytosol"/>
    <property type="evidence" value="ECO:0000314"/>
    <property type="project" value="HPA"/>
</dbReference>
<dbReference type="GO" id="GO:0016363">
    <property type="term" value="C:nuclear matrix"/>
    <property type="evidence" value="ECO:0000318"/>
    <property type="project" value="GO_Central"/>
</dbReference>
<dbReference type="GO" id="GO:0005643">
    <property type="term" value="C:nuclear pore"/>
    <property type="evidence" value="ECO:0000318"/>
    <property type="project" value="GO_Central"/>
</dbReference>
<dbReference type="GO" id="GO:0005654">
    <property type="term" value="C:nucleoplasm"/>
    <property type="evidence" value="ECO:0000314"/>
    <property type="project" value="UniProtKB"/>
</dbReference>
<dbReference type="GO" id="GO:0031267">
    <property type="term" value="F:small GTPase binding"/>
    <property type="evidence" value="ECO:0007669"/>
    <property type="project" value="InterPro"/>
</dbReference>
<dbReference type="GO" id="GO:0000049">
    <property type="term" value="F:tRNA binding"/>
    <property type="evidence" value="ECO:0000314"/>
    <property type="project" value="UniProtKB"/>
</dbReference>
<dbReference type="GO" id="GO:0006886">
    <property type="term" value="P:intracellular protein transport"/>
    <property type="evidence" value="ECO:0007669"/>
    <property type="project" value="InterPro"/>
</dbReference>
<dbReference type="GO" id="GO:0006409">
    <property type="term" value="P:tRNA export from nucleus"/>
    <property type="evidence" value="ECO:0000314"/>
    <property type="project" value="UniProtKB"/>
</dbReference>
<dbReference type="GO" id="GO:0071528">
    <property type="term" value="P:tRNA re-export from nucleus"/>
    <property type="evidence" value="ECO:0000318"/>
    <property type="project" value="GO_Central"/>
</dbReference>
<dbReference type="FunFam" id="1.25.10.10:FF:000105">
    <property type="entry name" value="Exportin for tRNA"/>
    <property type="match status" value="1"/>
</dbReference>
<dbReference type="Gene3D" id="1.25.10.10">
    <property type="entry name" value="Leucine-rich Repeat Variant"/>
    <property type="match status" value="1"/>
</dbReference>
<dbReference type="InterPro" id="IPR011989">
    <property type="entry name" value="ARM-like"/>
</dbReference>
<dbReference type="InterPro" id="IPR016024">
    <property type="entry name" value="ARM-type_fold"/>
</dbReference>
<dbReference type="InterPro" id="IPR013598">
    <property type="entry name" value="Exportin-1/Importin-b-like"/>
</dbReference>
<dbReference type="InterPro" id="IPR045546">
    <property type="entry name" value="Exportin-T_C"/>
</dbReference>
<dbReference type="InterPro" id="IPR001494">
    <property type="entry name" value="Importin-beta_N"/>
</dbReference>
<dbReference type="InterPro" id="IPR040017">
    <property type="entry name" value="XPOT"/>
</dbReference>
<dbReference type="PANTHER" id="PTHR15952:SF11">
    <property type="entry name" value="EXPORTIN-T"/>
    <property type="match status" value="1"/>
</dbReference>
<dbReference type="PANTHER" id="PTHR15952">
    <property type="entry name" value="EXPORTIN-T/LOS1"/>
    <property type="match status" value="1"/>
</dbReference>
<dbReference type="Pfam" id="PF19282">
    <property type="entry name" value="Exportin-T"/>
    <property type="match status" value="1"/>
</dbReference>
<dbReference type="Pfam" id="PF03810">
    <property type="entry name" value="IBN_N"/>
    <property type="match status" value="1"/>
</dbReference>
<dbReference type="Pfam" id="PF08389">
    <property type="entry name" value="Xpo1"/>
    <property type="match status" value="1"/>
</dbReference>
<dbReference type="SMART" id="SM00913">
    <property type="entry name" value="IBN_N"/>
    <property type="match status" value="1"/>
</dbReference>
<dbReference type="SUPFAM" id="SSF48371">
    <property type="entry name" value="ARM repeat"/>
    <property type="match status" value="1"/>
</dbReference>
<accession>O43592</accession>
<accession>A6NLH1</accession>
<accession>O43784</accession>
<accession>Q8WUG2</accession>
<accession>Q9BVS7</accession>
<feature type="chain" id="PRO_0000204716" description="Exportin-T">
    <location>
        <begin position="1"/>
        <end position="962"/>
    </location>
</feature>
<feature type="region of interest" description="Necessary for interaction with Ran, nuclear localization and nuclear import">
    <location>
        <begin position="1"/>
        <end position="385"/>
    </location>
</feature>
<feature type="region of interest" description="Necessary for tRNA-binding, cytoplasmic localization and nuclear export">
    <location>
        <begin position="443"/>
        <end position="962"/>
    </location>
</feature>
<feature type="modified residue" description="N-acetylmethionine" evidence="6 8 9">
    <location>
        <position position="1"/>
    </location>
</feature>
<feature type="modified residue" description="N6-acetyllysine" evidence="7">
    <location>
        <position position="634"/>
    </location>
</feature>
<feature type="sequence variant" id="VAR_026528" description="In dbSNP:rs17851795." evidence="2">
    <original>A</original>
    <variation>V</variation>
    <location>
        <position position="526"/>
    </location>
</feature>
<feature type="sequence variant" id="VAR_048962" description="In dbSNP:rs1051396.">
    <original>E</original>
    <variation>D</variation>
    <location>
        <position position="716"/>
    </location>
</feature>
<feature type="mutagenesis site" description="Abolishes binding to tRNA. Does not abolish shuttling behavior." evidence="1">
    <original>RKQLK</original>
    <variation>AAQLA</variation>
    <location>
        <begin position="405"/>
        <end position="409"/>
    </location>
</feature>
<feature type="mutagenesis site" description="Does not abolish binding to tRNA. Does not abolish shuttling behavior." evidence="1">
    <original>KVRSR</original>
    <variation>AVRSA</variation>
    <location>
        <begin position="539"/>
        <end position="543"/>
    </location>
</feature>
<feature type="mutagenesis site" description="Does not abolish binding to tRNA. Does not abolish shuttling behavior." evidence="1">
    <original>LFSRF</original>
    <variation>AFSRA</variation>
    <location>
        <begin position="547"/>
        <end position="551"/>
    </location>
</feature>
<feature type="mutagenesis site" description="Does not abolish binding to tRNA. Does not abolish shuttling behavior." evidence="1">
    <original>FSRFV</original>
    <variation>ASRFA</variation>
    <location>
        <begin position="548"/>
        <end position="552"/>
    </location>
</feature>
<feature type="mutagenesis site" description="Abolishes binding to tRNA. Does not abolish shuttling behavior." evidence="1">
    <original>RFVKSLNK</original>
    <variation>AFVASLNA</variation>
    <location>
        <begin position="550"/>
        <end position="557"/>
    </location>
</feature>
<feature type="sequence conflict" description="In Ref. 1; AAC39793." evidence="5" ref="1">
    <original>Q</original>
    <variation>R</variation>
    <location>
        <position position="360"/>
    </location>
</feature>
<comment type="function">
    <text evidence="1 3 4">Mediates the nuclear export of aminoacylated tRNAs. In the nucleus binds to tRNA and to the GTPase Ran in its active GTP-bound form. Docking of this trimeric complex to the nuclear pore complex (NPC) is mediated through binding to nucleoporins. Upon transit of a nuclear export complex into the cytoplasm, disassembling of the complex and hydrolysis of Ran-GTP to Ran-GDP (induced by RANBP1 and RANGAP1, respectively) cause release of the tRNA from the export receptor. XPOT then return to the nuclear compartment and mediate another round of transport. The directionality of nuclear export is thought to be conferred by an asymmetric distribution of the GTP- and GDP-bound forms of Ran between the cytoplasm and nucleus.</text>
</comment>
<comment type="subunit">
    <text evidence="1 3 4">Found in a complex with XPOT, Ran and tRNA. Probably found in a complex with nucleoporins. Interacts with Ran and tRNA in a GTP-dependent manner.</text>
</comment>
<comment type="interaction">
    <interactant intactId="EBI-286683">
        <id>O43592</id>
    </interactant>
    <interactant intactId="EBI-2949715">
        <id>O95678</id>
        <label>KRT75</label>
    </interactant>
    <organismsDiffer>false</organismsDiffer>
    <experiments>3</experiments>
</comment>
<comment type="interaction">
    <interactant intactId="EBI-286683">
        <id>O43592</id>
    </interactant>
    <interactant intactId="EBI-12029004">
        <id>P78424</id>
        <label>POU6F2</label>
    </interactant>
    <organismsDiffer>false</organismsDiffer>
    <experiments>3</experiments>
</comment>
<comment type="interaction">
    <interactant intactId="EBI-286683">
        <id>O43592</id>
    </interactant>
    <interactant intactId="EBI-286642">
        <id>P62826</id>
        <label>RAN</label>
    </interactant>
    <organismsDiffer>false</organismsDiffer>
    <experiments>3</experiments>
</comment>
<comment type="interaction">
    <interactant intactId="EBI-286683">
        <id>O43592</id>
    </interactant>
    <interactant intactId="EBI-2685506">
        <id>Q13595</id>
        <label>TRA2A</label>
    </interactant>
    <organismsDiffer>false</organismsDiffer>
    <experiments>3</experiments>
</comment>
<comment type="subcellular location">
    <subcellularLocation>
        <location>Nucleus</location>
    </subcellularLocation>
    <subcellularLocation>
        <location>Cytoplasm</location>
    </subcellularLocation>
    <text>Nuclear, once bound to tRNA and Ran the complex translocates to the cytoplasm. Shuttles between the nucleus and the cytoplasm.</text>
</comment>
<comment type="similarity">
    <text evidence="5">Belongs to the exportin family.</text>
</comment>